<reference key="1">
    <citation type="journal article" date="1997" name="DNA Res.">
        <title>Structural analysis of Arabidopsis thaliana chromosome 5. II. Sequence features of the regions of 1,044,062 bp covered by thirteen physically assigned P1 clones.</title>
        <authorList>
            <person name="Kotani H."/>
            <person name="Nakamura Y."/>
            <person name="Sato S."/>
            <person name="Kaneko T."/>
            <person name="Asamizu E."/>
            <person name="Miyajima N."/>
            <person name="Tabata S."/>
        </authorList>
    </citation>
    <scope>NUCLEOTIDE SEQUENCE [LARGE SCALE GENOMIC DNA]</scope>
    <source>
        <strain>cv. Columbia</strain>
    </source>
</reference>
<reference key="2">
    <citation type="journal article" date="2017" name="Plant J.">
        <title>Araport11: a complete reannotation of the Arabidopsis thaliana reference genome.</title>
        <authorList>
            <person name="Cheng C.Y."/>
            <person name="Krishnakumar V."/>
            <person name="Chan A.P."/>
            <person name="Thibaud-Nissen F."/>
            <person name="Schobel S."/>
            <person name="Town C.D."/>
        </authorList>
    </citation>
    <scope>GENOME REANNOTATION</scope>
    <source>
        <strain>cv. Columbia</strain>
    </source>
</reference>
<reference key="3">
    <citation type="journal article" date="2003" name="Science">
        <title>Empirical analysis of transcriptional activity in the Arabidopsis genome.</title>
        <authorList>
            <person name="Yamada K."/>
            <person name="Lim J."/>
            <person name="Dale J.M."/>
            <person name="Chen H."/>
            <person name="Shinn P."/>
            <person name="Palm C.J."/>
            <person name="Southwick A.M."/>
            <person name="Wu H.C."/>
            <person name="Kim C.J."/>
            <person name="Nguyen M."/>
            <person name="Pham P.K."/>
            <person name="Cheuk R.F."/>
            <person name="Karlin-Newmann G."/>
            <person name="Liu S.X."/>
            <person name="Lam B."/>
            <person name="Sakano H."/>
            <person name="Wu T."/>
            <person name="Yu G."/>
            <person name="Miranda M."/>
            <person name="Quach H.L."/>
            <person name="Tripp M."/>
            <person name="Chang C.H."/>
            <person name="Lee J.M."/>
            <person name="Toriumi M.J."/>
            <person name="Chan M.M."/>
            <person name="Tang C.C."/>
            <person name="Onodera C.S."/>
            <person name="Deng J.M."/>
            <person name="Akiyama K."/>
            <person name="Ansari Y."/>
            <person name="Arakawa T."/>
            <person name="Banh J."/>
            <person name="Banno F."/>
            <person name="Bowser L."/>
            <person name="Brooks S.Y."/>
            <person name="Carninci P."/>
            <person name="Chao Q."/>
            <person name="Choy N."/>
            <person name="Enju A."/>
            <person name="Goldsmith A.D."/>
            <person name="Gurjal M."/>
            <person name="Hansen N.F."/>
            <person name="Hayashizaki Y."/>
            <person name="Johnson-Hopson C."/>
            <person name="Hsuan V.W."/>
            <person name="Iida K."/>
            <person name="Karnes M."/>
            <person name="Khan S."/>
            <person name="Koesema E."/>
            <person name="Ishida J."/>
            <person name="Jiang P.X."/>
            <person name="Jones T."/>
            <person name="Kawai J."/>
            <person name="Kamiya A."/>
            <person name="Meyers C."/>
            <person name="Nakajima M."/>
            <person name="Narusaka M."/>
            <person name="Seki M."/>
            <person name="Sakurai T."/>
            <person name="Satou M."/>
            <person name="Tamse R."/>
            <person name="Vaysberg M."/>
            <person name="Wallender E.K."/>
            <person name="Wong C."/>
            <person name="Yamamura Y."/>
            <person name="Yuan S."/>
            <person name="Shinozaki K."/>
            <person name="Davis R.W."/>
            <person name="Theologis A."/>
            <person name="Ecker J.R."/>
        </authorList>
    </citation>
    <scope>NUCLEOTIDE SEQUENCE [LARGE SCALE MRNA] (ISOFORM 1)</scope>
    <source>
        <strain>cv. Columbia</strain>
    </source>
</reference>
<reference key="4">
    <citation type="submission" date="2005-03" db="EMBL/GenBank/DDBJ databases">
        <title>Large-scale analysis of RIKEN Arabidopsis full-length (RAFL) cDNAs.</title>
        <authorList>
            <person name="Totoki Y."/>
            <person name="Seki M."/>
            <person name="Ishida J."/>
            <person name="Nakajima M."/>
            <person name="Enju A."/>
            <person name="Kamiya A."/>
            <person name="Narusaka M."/>
            <person name="Shin-i T."/>
            <person name="Nakagawa M."/>
            <person name="Sakamoto N."/>
            <person name="Oishi K."/>
            <person name="Kohara Y."/>
            <person name="Kobayashi M."/>
            <person name="Toyoda A."/>
            <person name="Sakaki Y."/>
            <person name="Sakurai T."/>
            <person name="Iida K."/>
            <person name="Akiyama K."/>
            <person name="Satou M."/>
            <person name="Toyoda T."/>
            <person name="Konagaya A."/>
            <person name="Carninci P."/>
            <person name="Kawai J."/>
            <person name="Hayashizaki Y."/>
            <person name="Shinozaki K."/>
        </authorList>
    </citation>
    <scope>NUCLEOTIDE SEQUENCE [LARGE SCALE MRNA] (ISOFORM 1)</scope>
    <source>
        <strain>cv. Columbia</strain>
    </source>
</reference>
<reference key="5">
    <citation type="journal article" date="2005" name="Genetics">
        <title>High-diversity genes in the Arabidopsis genome.</title>
        <authorList>
            <person name="Cork J.M."/>
            <person name="Purugganan M.D."/>
        </authorList>
    </citation>
    <scope>NUCLEOTIDE SEQUENCE [GENOMIC DNA] OF 15-50 (ISOFORM 1/2)</scope>
    <source>
        <strain>cv. Ag-0</strain>
        <strain>cv. Gr-3</strain>
        <strain>cv. Ita-0</strain>
        <strain>cv. Kas-1</strain>
        <strain>cv. Lip-0</strain>
        <strain>cv. Me-0</strain>
        <strain>cv. Mt-0</strain>
        <strain>cv. Oy-0</strain>
        <strain>cv. Te-0</strain>
        <strain>cv. Tu-1</strain>
    </source>
</reference>
<reference key="6">
    <citation type="journal article" date="2006" name="Plant Cell">
        <title>pTAC2, -6, and -12 are components of the transcriptionally active plastid chromosome that are required for plastid gene expression.</title>
        <authorList>
            <person name="Pfalz J."/>
            <person name="Liere K."/>
            <person name="Kandlbinder A."/>
            <person name="Dietz K.-J."/>
            <person name="Oelmueller R."/>
        </authorList>
    </citation>
    <scope>NOMENCLATURE</scope>
</reference>
<reference key="7">
    <citation type="journal article" date="2013" name="Physiol. Plantarum">
        <title>TAC7, an essential component of the plastid transcriptionally active chromosome complex, interacts with FLN1, TAC10, TAC12 and TAC14 to regulate chloroplast gene expression in Arabidopsis thaliana.</title>
        <authorList>
            <person name="Yu Q.-B."/>
            <person name="Lu Y."/>
            <person name="Ma Q."/>
            <person name="Zhao T.-T."/>
            <person name="Huang C."/>
            <person name="Zhao H.-F."/>
            <person name="Zhang X.-L."/>
            <person name="Lv R.-H."/>
            <person name="Yang Z.-N."/>
        </authorList>
    </citation>
    <scope>FUNCTION</scope>
    <scope>DISRUPTION PHENOTYPE</scope>
    <scope>INTERACTION WITH FLN1; PTAC10; PTAC12/HMR/PAP5 AND PTAC14</scope>
    <scope>SUBCELLULAR LOCATION</scope>
    <scope>INDUCTION BY LIGHT</scope>
    <source>
        <strain>cv. Columbia</strain>
        <strain>cv. Landsberg erecta</strain>
    </source>
</reference>
<reference key="8">
    <citation type="journal article" date="2020" name="Biomolecules">
        <title>Cytokinin-regulated expression of Arabidopsis thaliana PAP genes and its implication for the expression of chloroplast-encoded genes.</title>
        <authorList>
            <person name="Andreeva A.A."/>
            <person name="Vankova R."/>
            <person name="Bychkov I.A."/>
            <person name="Kudryakova N.V."/>
            <person name="Danilova M.N."/>
            <person name="Lacek J."/>
            <person name="Pojidaeva E.S."/>
            <person name="Kusnetsov V.V."/>
        </authorList>
    </citation>
    <scope>INDUCTION BY CYTOKININ</scope>
    <source>
        <strain>cv. Columbia</strain>
    </source>
</reference>
<reference key="9">
    <citation type="journal article" date="2020" name="Front. Plant Sci.">
        <title>Arabidopsis Seedling Lethal 1 interacting with plastid-encoded RNA polymerase complex proteins is essential for chloroplast development.</title>
        <authorList>
            <person name="Jiang D."/>
            <person name="Tang R."/>
            <person name="Shi Y."/>
            <person name="Ke X."/>
            <person name="Wang Y."/>
            <person name="Che Y."/>
            <person name="Luan S."/>
            <person name="Hou X."/>
        </authorList>
    </citation>
    <scope>INTERACTION WITH SL1/MTERF3</scope>
    <source>
        <strain>cv. Columbia</strain>
    </source>
</reference>
<feature type="transit peptide" description="Chloroplast" evidence="1">
    <location>
        <begin position="1"/>
        <end position="32"/>
    </location>
</feature>
<feature type="chain" id="PRO_0000433433" description="Protein PLASTID TRANSCRIPTIONALLY ACTIVE 7" evidence="1">
    <location>
        <begin position="33"/>
        <end position="161"/>
    </location>
</feature>
<feature type="splice variant" id="VSP_057775" description="In isoform 2.">
    <original>T</original>
    <variation>TLVSTKLDI</variation>
    <location>
        <position position="49"/>
    </location>
</feature>
<feature type="sequence conflict" description="In Ref. 4; BAD95132." evidence="6" ref="4">
    <original>I</original>
    <variation>V</variation>
    <location>
        <position position="16"/>
    </location>
</feature>
<dbReference type="EMBL" id="AB006701">
    <property type="status" value="NOT_ANNOTATED_CDS"/>
    <property type="molecule type" value="Genomic_DNA"/>
</dbReference>
<dbReference type="EMBL" id="CP002688">
    <property type="protein sequence ID" value="AED93287.1"/>
    <property type="molecule type" value="Genomic_DNA"/>
</dbReference>
<dbReference type="EMBL" id="CP002688">
    <property type="protein sequence ID" value="AED93288.1"/>
    <property type="molecule type" value="Genomic_DNA"/>
</dbReference>
<dbReference type="EMBL" id="AY063802">
    <property type="protein sequence ID" value="AAL36158.1"/>
    <property type="molecule type" value="mRNA"/>
</dbReference>
<dbReference type="EMBL" id="AY123012">
    <property type="protein sequence ID" value="AAM67545.1"/>
    <property type="molecule type" value="mRNA"/>
</dbReference>
<dbReference type="EMBL" id="AK220647">
    <property type="protein sequence ID" value="BAD95132.1"/>
    <property type="molecule type" value="mRNA"/>
</dbReference>
<dbReference type="EMBL" id="DQ132131">
    <property type="protein sequence ID" value="AAZ74736.1"/>
    <property type="molecule type" value="Genomic_DNA"/>
</dbReference>
<dbReference type="EMBL" id="DQ132132">
    <property type="protein sequence ID" value="AAZ74737.1"/>
    <property type="molecule type" value="Genomic_DNA"/>
</dbReference>
<dbReference type="EMBL" id="DQ132133">
    <property type="protein sequence ID" value="AAZ74738.1"/>
    <property type="molecule type" value="Genomic_DNA"/>
</dbReference>
<dbReference type="EMBL" id="DQ132134">
    <property type="protein sequence ID" value="AAZ74739.1"/>
    <property type="molecule type" value="Genomic_DNA"/>
</dbReference>
<dbReference type="EMBL" id="DQ132135">
    <property type="protein sequence ID" value="AAZ74740.1"/>
    <property type="molecule type" value="Genomic_DNA"/>
</dbReference>
<dbReference type="EMBL" id="DQ132136">
    <property type="protein sequence ID" value="AAZ74741.1"/>
    <property type="molecule type" value="Genomic_DNA"/>
</dbReference>
<dbReference type="EMBL" id="DQ132137">
    <property type="protein sequence ID" value="AAZ74742.1"/>
    <property type="molecule type" value="Genomic_DNA"/>
</dbReference>
<dbReference type="EMBL" id="DQ132142">
    <property type="protein sequence ID" value="AAZ74747.1"/>
    <property type="molecule type" value="Genomic_DNA"/>
</dbReference>
<dbReference type="EMBL" id="DQ132143">
    <property type="protein sequence ID" value="AAZ74748.1"/>
    <property type="molecule type" value="Genomic_DNA"/>
</dbReference>
<dbReference type="EMBL" id="DQ132144">
    <property type="protein sequence ID" value="AAZ74749.1"/>
    <property type="molecule type" value="Genomic_DNA"/>
</dbReference>
<dbReference type="RefSeq" id="NP_001190379.1">
    <molecule id="Q8VZV9-2"/>
    <property type="nucleotide sequence ID" value="NM_001203450.1"/>
</dbReference>
<dbReference type="RefSeq" id="NP_680215.1">
    <molecule id="Q8VZV9-1"/>
    <property type="nucleotide sequence ID" value="NM_147910.4"/>
</dbReference>
<dbReference type="SMR" id="Q8VZV9"/>
<dbReference type="FunCoup" id="Q8VZV9">
    <property type="interactions" value="1724"/>
</dbReference>
<dbReference type="IntAct" id="Q8VZV9">
    <property type="interactions" value="2"/>
</dbReference>
<dbReference type="STRING" id="3702.Q8VZV9"/>
<dbReference type="PaxDb" id="3702-AT5G24314.2"/>
<dbReference type="ProteomicsDB" id="248843">
    <molecule id="Q8VZV9-1"/>
</dbReference>
<dbReference type="EnsemblPlants" id="AT5G24314.1">
    <molecule id="Q8VZV9-1"/>
    <property type="protein sequence ID" value="AT5G24314.1"/>
    <property type="gene ID" value="AT5G24314"/>
</dbReference>
<dbReference type="EnsemblPlants" id="AT5G24314.2">
    <molecule id="Q8VZV9-2"/>
    <property type="protein sequence ID" value="AT5G24314.2"/>
    <property type="gene ID" value="AT5G24314"/>
</dbReference>
<dbReference type="GeneID" id="832500"/>
<dbReference type="Gramene" id="AT5G24314.1">
    <molecule id="Q8VZV9-1"/>
    <property type="protein sequence ID" value="AT5G24314.1"/>
    <property type="gene ID" value="AT5G24314"/>
</dbReference>
<dbReference type="Gramene" id="AT5G24314.2">
    <molecule id="Q8VZV9-2"/>
    <property type="protein sequence ID" value="AT5G24314.2"/>
    <property type="gene ID" value="AT5G24314"/>
</dbReference>
<dbReference type="KEGG" id="ath:AT5G24314"/>
<dbReference type="Araport" id="AT5G24314"/>
<dbReference type="TAIR" id="AT5G24314">
    <property type="gene designation" value="PTAC7"/>
</dbReference>
<dbReference type="eggNOG" id="ENOG502RZZ1">
    <property type="taxonomic scope" value="Eukaryota"/>
</dbReference>
<dbReference type="InParanoid" id="Q8VZV9"/>
<dbReference type="OMA" id="MQPMAKV"/>
<dbReference type="OrthoDB" id="1915194at2759"/>
<dbReference type="PRO" id="PR:Q8VZV9"/>
<dbReference type="Proteomes" id="UP000006548">
    <property type="component" value="Chromosome 5"/>
</dbReference>
<dbReference type="ExpressionAtlas" id="Q8VZV9">
    <property type="expression patterns" value="baseline and differential"/>
</dbReference>
<dbReference type="GO" id="GO:0009507">
    <property type="term" value="C:chloroplast"/>
    <property type="evidence" value="ECO:0000314"/>
    <property type="project" value="UniProtKB"/>
</dbReference>
<dbReference type="GO" id="GO:0042644">
    <property type="term" value="C:chloroplast nucleoid"/>
    <property type="evidence" value="ECO:0007005"/>
    <property type="project" value="TAIR"/>
</dbReference>
<dbReference type="GO" id="GO:0000427">
    <property type="term" value="C:plastid-encoded plastid RNA polymerase complex"/>
    <property type="evidence" value="ECO:0000314"/>
    <property type="project" value="UniProtKB"/>
</dbReference>
<dbReference type="GO" id="GO:0009658">
    <property type="term" value="P:chloroplast organization"/>
    <property type="evidence" value="ECO:0000315"/>
    <property type="project" value="UniProtKB"/>
</dbReference>
<dbReference type="GO" id="GO:0042793">
    <property type="term" value="P:plastid transcription"/>
    <property type="evidence" value="ECO:0000315"/>
    <property type="project" value="UniProtKB"/>
</dbReference>
<dbReference type="GO" id="GO:0009735">
    <property type="term" value="P:response to cytokinin"/>
    <property type="evidence" value="ECO:0000270"/>
    <property type="project" value="UniProtKB"/>
</dbReference>
<dbReference type="GO" id="GO:0009416">
    <property type="term" value="P:response to light stimulus"/>
    <property type="evidence" value="ECO:0000270"/>
    <property type="project" value="UniProtKB"/>
</dbReference>
<dbReference type="GO" id="GO:0010027">
    <property type="term" value="P:thylakoid membrane organization"/>
    <property type="evidence" value="ECO:0000315"/>
    <property type="project" value="UniProtKB"/>
</dbReference>
<dbReference type="InterPro" id="IPR038958">
    <property type="entry name" value="PTAC7"/>
</dbReference>
<dbReference type="PANTHER" id="PTHR37257">
    <property type="entry name" value="PROTEIN PLASTID TRANSCRIPTIONALLY ACTIVE 7"/>
    <property type="match status" value="1"/>
</dbReference>
<dbReference type="PANTHER" id="PTHR37257:SF1">
    <property type="entry name" value="PROTEIN PLASTID TRANSCRIPTIONALLY ACTIVE 7"/>
    <property type="match status" value="1"/>
</dbReference>
<evidence type="ECO:0000255" key="1"/>
<evidence type="ECO:0000269" key="2">
    <source>
    </source>
</evidence>
<evidence type="ECO:0000269" key="3">
    <source>
    </source>
</evidence>
<evidence type="ECO:0000269" key="4">
    <source>
    </source>
</evidence>
<evidence type="ECO:0000303" key="5">
    <source>
    </source>
</evidence>
<evidence type="ECO:0000305" key="6"/>
<evidence type="ECO:0000312" key="7">
    <source>
        <dbReference type="Araport" id="AT5G24314"/>
    </source>
</evidence>
<evidence type="ECO:0000312" key="8">
    <source>
        <dbReference type="EMBL" id="AB006701"/>
    </source>
</evidence>
<organism>
    <name type="scientific">Arabidopsis thaliana</name>
    <name type="common">Mouse-ear cress</name>
    <dbReference type="NCBI Taxonomy" id="3702"/>
    <lineage>
        <taxon>Eukaryota</taxon>
        <taxon>Viridiplantae</taxon>
        <taxon>Streptophyta</taxon>
        <taxon>Embryophyta</taxon>
        <taxon>Tracheophyta</taxon>
        <taxon>Spermatophyta</taxon>
        <taxon>Magnoliopsida</taxon>
        <taxon>eudicotyledons</taxon>
        <taxon>Gunneridae</taxon>
        <taxon>Pentapetalae</taxon>
        <taxon>rosids</taxon>
        <taxon>malvids</taxon>
        <taxon>Brassicales</taxon>
        <taxon>Brassicaceae</taxon>
        <taxon>Camelineae</taxon>
        <taxon>Arabidopsis</taxon>
    </lineage>
</organism>
<comment type="function">
    <text evidence="2">Essential for chloroplast development, especially for thylakoid formation. Involved in plastid gene expression, probably by maintaining plastid-encoded RNA polymerase (PEP) activity.</text>
</comment>
<comment type="subunit">
    <text evidence="2 4">Component of the transcriptionally active chromosome (TAC) complexes (PubMed:23082802). Interacts with FLN1, PTAC10, PTAC12/HMR/PAP5 and PTAC14 (PubMed:23082802). Binds to SL1/MTERF3 (PubMed:33391315).</text>
</comment>
<comment type="subcellular location">
    <subcellularLocation>
        <location evidence="2">Plastid</location>
        <location evidence="2">Chloroplast</location>
    </subcellularLocation>
</comment>
<comment type="alternative products">
    <event type="alternative splicing"/>
    <isoform>
        <id>Q8VZV9-1</id>
        <name>1</name>
        <sequence type="displayed"/>
    </isoform>
    <isoform>
        <id>Q8VZV9-2</id>
        <name>2</name>
        <sequence type="described" ref="VSP_057775"/>
    </isoform>
</comment>
<comment type="tissue specificity">
    <text evidence="2">Mostly expressed in leaves, flowers and seedlings, and, to a lower extent, in roots and stems.</text>
</comment>
<comment type="induction">
    <text evidence="2 3">By light (PubMed:23082802). Induced by cytokinin (e.g. trans-zeatin) (PubMed:33322466).</text>
</comment>
<comment type="disruption phenotype">
    <text evidence="2">Albino plants with defective chloroplasts containing a few appressed membranes but lacking thylakoids, even when grown under normal light conditions. Reduced plastid-encoded RNA polymerase (PEP) activity.</text>
</comment>
<protein>
    <recommendedName>
        <fullName evidence="5">Protein PLASTID TRANSCRIPTIONALLY ACTIVE 7</fullName>
        <shortName evidence="5">pTAC7</shortName>
    </recommendedName>
    <alternativeName>
        <fullName>PEP-associated protein 12</fullName>
    </alternativeName>
    <alternativeName>
        <fullName>Protein PIGMENT DEFECTIVE 225</fullName>
    </alternativeName>
</protein>
<gene>
    <name evidence="5" type="primary">PTAC7</name>
    <name type="synonym">PAP12</name>
    <name type="synonym">PDE225</name>
    <name evidence="5" type="synonym">TAC7</name>
    <name evidence="7" type="ordered locus">At5g24314</name>
    <name evidence="8" type="ORF">MOP9.14</name>
</gene>
<proteinExistence type="evidence at protein level"/>
<sequence length="161" mass="18732">MASFTCSSPSSILPIIDTRSGNLRCTFQSQVSCGIQRDDNGRRVWRRRTLTKKDDMLRYKMQRVPFVEEQVRKIREVGKVMTMDIEQLLLREDNRFEFVNSVAAEATEYVDKNRDEYGGSKKAIFHVLSNRVNDLGFDRPEAYVEADPYKPGPGYLLEYYT</sequence>
<name>PTA7_ARATH</name>
<accession>Q8VZV9</accession>
<accession>F4KFT3</accession>
<accession>Q3YIT6</accession>
<accession>Q570R0</accession>
<keyword id="KW-0025">Alternative splicing</keyword>
<keyword id="KW-0150">Chloroplast</keyword>
<keyword id="KW-0934">Plastid</keyword>
<keyword id="KW-1185">Reference proteome</keyword>
<keyword id="KW-0804">Transcription</keyword>
<keyword id="KW-0805">Transcription regulation</keyword>
<keyword id="KW-0809">Transit peptide</keyword>